<accession>P0DJL7</accession>
<accession>P33120</accession>
<accession>Q5XQ41</accession>
<accession>Q5XQ42</accession>
<accession>Q5XQ43</accession>
<reference key="1">
    <citation type="journal article" date="1990" name="Proc. Natl. Acad. Sci. U.S.A.">
        <title>Molecular cloning and DNA sequence analysis of a diphtheria tox iron-dependent regulatory element (dtxR) from Corynebacterium diphtheriae.</title>
        <authorList>
            <person name="Boyd J.M."/>
            <person name="Oza M.N."/>
            <person name="Murphy J.R."/>
        </authorList>
    </citation>
    <scope>NUCLEOTIDE SEQUENCE [GENOMIC DNA]</scope>
    <source>
        <strain>C7(-)</strain>
    </source>
</reference>
<reference key="2">
    <citation type="journal article" date="1992" name="J. Bacteriol.">
        <title>DNA sequences and characterization of dtxR alleles from Corynebacterium diphtheriae PW8(-), 1030(-), and C7hm723(-).</title>
        <authorList>
            <person name="Boyd J.M."/>
            <person name="Hall K.C."/>
            <person name="Murphy J.R."/>
        </authorList>
    </citation>
    <scope>NUCLEOTIDE SEQUENCE [GENOMIC DNA]</scope>
    <source>
        <strain>1030(-)</strain>
        <strain>C7hm723(-)</strain>
    </source>
</reference>
<reference key="3">
    <citation type="journal article" date="2005" name="J. Clin. Microbiol.">
        <title>Molecular characterization of diphtheria toxin repressor (dtxR) genes present in nontoxigenic Corynebacterium diphtheriae strains isolated in the United Kingdom.</title>
        <authorList>
            <person name="De Zoysa A.S."/>
            <person name="Efstratiou A."/>
            <person name="Hawkey P.M."/>
        </authorList>
    </citation>
    <scope>NUCLEOTIDE SEQUENCE [GENOMIC DNA]</scope>
    <scope>STUDY OF FUNCTIONALITY</scope>
    <source>
        <strain>CD95/211-</strain>
        <strain>CD95/305-</strain>
        <strain>CD95/407-</strain>
    </source>
</reference>
<reference key="4">
    <citation type="journal article" date="2003" name="Nucleic Acids Res.">
        <title>The complete genome sequence and analysis of Corynebacterium diphtheriae NCTC13129.</title>
        <authorList>
            <person name="Cerdeno-Tarraga A.-M."/>
            <person name="Efstratiou A."/>
            <person name="Dover L.G."/>
            <person name="Holden M.T.G."/>
            <person name="Pallen M.J."/>
            <person name="Bentley S.D."/>
            <person name="Besra G.S."/>
            <person name="Churcher C.M."/>
            <person name="James K.D."/>
            <person name="De Zoysa A."/>
            <person name="Chillingworth T."/>
            <person name="Cronin A."/>
            <person name="Dowd L."/>
            <person name="Feltwell T."/>
            <person name="Hamlin N."/>
            <person name="Holroyd S."/>
            <person name="Jagels K."/>
            <person name="Moule S."/>
            <person name="Quail M.A."/>
            <person name="Rabbinowitsch E."/>
            <person name="Rutherford K.M."/>
            <person name="Thomson N.R."/>
            <person name="Unwin L."/>
            <person name="Whitehead S."/>
            <person name="Barrell B.G."/>
            <person name="Parkhill J."/>
        </authorList>
    </citation>
    <scope>NUCLEOTIDE SEQUENCE [LARGE SCALE GENOMIC DNA]</scope>
    <source>
        <strain>ATCC 700971 / NCTC 13129 / Biotype gravis</strain>
    </source>
</reference>
<reference key="5">
    <citation type="journal article" date="1992" name="Proc. Natl. Acad. Sci. U.S.A.">
        <title>Purification and characterization of the diphtheria toxin repressor.</title>
        <authorList>
            <person name="Schmitt M.P."/>
            <person name="Twiddy E.M."/>
            <person name="Holmes R.K."/>
        </authorList>
    </citation>
    <scope>CHARACTERIZATION</scope>
</reference>
<reference key="6">
    <citation type="journal article" date="1992" name="J. Biol. Chem.">
        <title>Binding of the metalloregulatory protein DtxR to the diphtheria tox operator requires a divalent heavy metal ion and protects the palindromic sequence from DNase I digestion.</title>
        <authorList>
            <person name="Tao X."/>
            <person name="Murphy J.R."/>
        </authorList>
    </citation>
    <scope>METAL-BINDING</scope>
</reference>
<reference key="7">
    <citation type="journal article" date="1996" name="Biochemistry">
        <title>High-resolution structure of the diphtheria toxin repressor complexed with cobalt and manganese reveals an SH3-like third domain and suggests a possible role of phosphate as co-corepressor.</title>
        <authorList>
            <person name="Qiu X."/>
            <person name="Pohl E."/>
            <person name="Holmes R.K."/>
            <person name="Hol W.G.J."/>
        </authorList>
    </citation>
    <scope>X-RAY CRYSTALLOGRAPHY (2.0 ANGSTROMS)</scope>
</reference>
<reference key="8">
    <citation type="journal article" date="1995" name="Proc. Natl. Acad. Sci. U.S.A.">
        <title>Structures of the apo- and the metal ion-activated forms of the diphtheria tox repressor from Corynebacterium diphtheriae.</title>
        <authorList>
            <person name="Schiering N."/>
            <person name="Tao X."/>
            <person name="Zeng H."/>
            <person name="Murphy J.R."/>
            <person name="Petsko G.A."/>
            <person name="Ringe D."/>
        </authorList>
    </citation>
    <scope>X-RAY CRYSTALLOGRAPHY (3.0 ANGSTROMS)</scope>
</reference>
<reference key="9">
    <citation type="journal article" date="1998" name="Nature">
        <title>Structure of the metal-ion-activated diphtheria toxin repressor/tox operator complex.</title>
        <authorList>
            <person name="White A."/>
            <person name="Ding X."/>
            <person name="Vanderspek J.C."/>
            <person name="Murphy J.R."/>
            <person name="Ringe D."/>
        </authorList>
    </citation>
    <scope>X-RAY CRYSTALLOGRAPHY (2.4 ANGSTROMS)</scope>
</reference>
<reference key="10">
    <citation type="journal article" date="1999" name="Infect. Immun.">
        <title>Anion-coordinating residues at binding site 1 are essential for the biological activity of the diphtheria toxin repressor.</title>
        <authorList>
            <person name="Goranson-Siekierke J."/>
            <person name="Pohl E."/>
            <person name="Hol W.G.J."/>
            <person name="Holmes R.K."/>
        </authorList>
    </citation>
    <scope>X-RAY CRYSTALLOGRAPHY (2.2 ANGSTROMS)</scope>
</reference>
<reference key="11">
    <citation type="journal article" date="1999" name="Proc. Natl. Acad. Sci. U.S.A.">
        <title>Solution structure and peptide binding studies of the C-terminal src homology 3-like domain of the diphtheria toxin repressor protein.</title>
        <authorList>
            <person name="Wang G."/>
            <person name="Wylie G.P."/>
            <person name="Twigg P.D."/>
            <person name="Caspar D.L.D."/>
            <person name="Murphy J.R."/>
            <person name="Logan T.M."/>
        </authorList>
    </citation>
    <scope>STRUCTURE BY NMR OF 130-226</scope>
</reference>
<proteinExistence type="evidence at protein level"/>
<organism>
    <name type="scientific">Corynebacterium diphtheriae (strain ATCC 700971 / NCTC 13129 / Biotype gravis)</name>
    <dbReference type="NCBI Taxonomy" id="257309"/>
    <lineage>
        <taxon>Bacteria</taxon>
        <taxon>Bacillati</taxon>
        <taxon>Actinomycetota</taxon>
        <taxon>Actinomycetes</taxon>
        <taxon>Mycobacteriales</taxon>
        <taxon>Corynebacteriaceae</taxon>
        <taxon>Corynebacterium</taxon>
    </lineage>
</organism>
<name>DTXR_CORDI</name>
<keyword id="KW-0002">3D-structure</keyword>
<keyword id="KW-0963">Cytoplasm</keyword>
<keyword id="KW-0238">DNA-binding</keyword>
<keyword id="KW-0408">Iron</keyword>
<keyword id="KW-1185">Reference proteome</keyword>
<keyword id="KW-0678">Repressor</keyword>
<keyword id="KW-0804">Transcription</keyword>
<keyword id="KW-0805">Transcription regulation</keyword>
<protein>
    <recommendedName>
        <fullName>Diphtheria toxin repressor</fullName>
    </recommendedName>
    <alternativeName>
        <fullName>Iron-dependent diphtheria tox regulatory element</fullName>
    </alternativeName>
    <alternativeName>
        <fullName>Tox regulatory factor</fullName>
    </alternativeName>
</protein>
<sequence length="226" mass="25344">MKDLVDTTEMYLRTIYELEEEGVTPLRARIAERLEQSGPTVSQTVARMERDGLVVVASDRSLQMTPTGRTLATAVMRKHRLAERLLTDIIGLDINKVHDEACRWEHVMSDEVERRLVKVLKDVSRSPFGNPIPGLDELGVGNSDAAVPGTRVIDAATSMPRKVRIVQINEIFQVETDQFTQLLDADIRVGSEVEIVDRDGHITLSHNGKDVELIDDLAHTIRIEEL</sequence>
<dbReference type="EMBL" id="M34239">
    <property type="protein sequence ID" value="AAA23296.1"/>
    <property type="molecule type" value="Genomic_DNA"/>
</dbReference>
<dbReference type="EMBL" id="M80336">
    <property type="protein sequence ID" value="AAA23302.1"/>
    <property type="molecule type" value="Genomic_DNA"/>
</dbReference>
<dbReference type="EMBL" id="M80337">
    <property type="protein sequence ID" value="AAA23301.1"/>
    <property type="molecule type" value="Genomic_DNA"/>
</dbReference>
<dbReference type="EMBL" id="AY741368">
    <property type="protein sequence ID" value="AAU93781.1"/>
    <property type="molecule type" value="Genomic_DNA"/>
</dbReference>
<dbReference type="EMBL" id="AY741369">
    <property type="protein sequence ID" value="AAU93782.1"/>
    <property type="molecule type" value="Genomic_DNA"/>
</dbReference>
<dbReference type="EMBL" id="AY741370">
    <property type="protein sequence ID" value="AAU93783.1"/>
    <property type="molecule type" value="Genomic_DNA"/>
</dbReference>
<dbReference type="EMBL" id="BX248358">
    <property type="protein sequence ID" value="CAE49945.1"/>
    <property type="molecule type" value="Genomic_DNA"/>
</dbReference>
<dbReference type="PIR" id="A35968">
    <property type="entry name" value="A35968"/>
</dbReference>
<dbReference type="RefSeq" id="WP_010935052.1">
    <property type="nucleotide sequence ID" value="NC_002935.2"/>
</dbReference>
<dbReference type="PDB" id="1BI0">
    <property type="method" value="X-ray"/>
    <property type="resolution" value="2.30 A"/>
    <property type="chains" value="A=1-226"/>
</dbReference>
<dbReference type="PDB" id="1BI1">
    <property type="method" value="X-ray"/>
    <property type="resolution" value="2.20 A"/>
    <property type="chains" value="A=1-226"/>
</dbReference>
<dbReference type="PDB" id="1BI2">
    <property type="method" value="X-ray"/>
    <property type="resolution" value="2.30 A"/>
    <property type="chains" value="A/B=1-226"/>
</dbReference>
<dbReference type="PDB" id="1BI3">
    <property type="method" value="X-ray"/>
    <property type="resolution" value="2.40 A"/>
    <property type="chains" value="A/B=1-226"/>
</dbReference>
<dbReference type="PDB" id="1BYM">
    <property type="method" value="NMR"/>
    <property type="chains" value="A=130-226"/>
</dbReference>
<dbReference type="PDB" id="1C0W">
    <property type="method" value="X-ray"/>
    <property type="resolution" value="3.20 A"/>
    <property type="chains" value="A/B/C/D=2-226"/>
</dbReference>
<dbReference type="PDB" id="1DDN">
    <property type="method" value="X-ray"/>
    <property type="resolution" value="3.00 A"/>
    <property type="chains" value="A/B/C/D=1-226"/>
</dbReference>
<dbReference type="PDB" id="1DPR">
    <property type="method" value="X-ray"/>
    <property type="resolution" value="3.00 A"/>
    <property type="chains" value="A/B=1-226"/>
</dbReference>
<dbReference type="PDB" id="1F5T">
    <property type="method" value="X-ray"/>
    <property type="resolution" value="3.00 A"/>
    <property type="chains" value="A/B/C/D=1-121"/>
</dbReference>
<dbReference type="PDB" id="1FWZ">
    <property type="method" value="X-ray"/>
    <property type="resolution" value="2.30 A"/>
    <property type="chains" value="A=1-226"/>
</dbReference>
<dbReference type="PDB" id="1G3S">
    <property type="method" value="X-ray"/>
    <property type="resolution" value="2.40 A"/>
    <property type="chains" value="A=1-226"/>
</dbReference>
<dbReference type="PDB" id="1G3T">
    <property type="method" value="X-ray"/>
    <property type="resolution" value="2.35 A"/>
    <property type="chains" value="A/B=1-226"/>
</dbReference>
<dbReference type="PDB" id="1G3W">
    <property type="method" value="X-ray"/>
    <property type="resolution" value="2.40 A"/>
    <property type="chains" value="A=1-226"/>
</dbReference>
<dbReference type="PDB" id="1G3Y">
    <property type="method" value="X-ray"/>
    <property type="resolution" value="2.80 A"/>
    <property type="chains" value="A=1-226"/>
</dbReference>
<dbReference type="PDB" id="1P92">
    <property type="method" value="X-ray"/>
    <property type="resolution" value="2.10 A"/>
    <property type="chains" value="A=1-226"/>
</dbReference>
<dbReference type="PDB" id="1QVP">
    <property type="method" value="NMR"/>
    <property type="chains" value="A=148-226"/>
</dbReference>
<dbReference type="PDB" id="1QW1">
    <property type="method" value="NMR"/>
    <property type="chains" value="A=110-226"/>
</dbReference>
<dbReference type="PDB" id="1XCV">
    <property type="method" value="X-ray"/>
    <property type="resolution" value="2.10 A"/>
    <property type="chains" value="A=1-139"/>
</dbReference>
<dbReference type="PDB" id="2DTR">
    <property type="method" value="X-ray"/>
    <property type="resolution" value="1.90 A"/>
    <property type="chains" value="A=1-226"/>
</dbReference>
<dbReference type="PDB" id="2QQ9">
    <property type="method" value="X-ray"/>
    <property type="resolution" value="1.71 A"/>
    <property type="chains" value="A=1-226"/>
</dbReference>
<dbReference type="PDB" id="2QQA">
    <property type="method" value="X-ray"/>
    <property type="resolution" value="2.10 A"/>
    <property type="chains" value="A=1-226"/>
</dbReference>
<dbReference type="PDB" id="2QQB">
    <property type="method" value="X-ray"/>
    <property type="resolution" value="1.92 A"/>
    <property type="chains" value="A=1-226"/>
</dbReference>
<dbReference type="PDB" id="2TDX">
    <property type="method" value="X-ray"/>
    <property type="resolution" value="2.40 A"/>
    <property type="chains" value="A=1-226"/>
</dbReference>
<dbReference type="PDB" id="3GLX">
    <property type="method" value="X-ray"/>
    <property type="resolution" value="1.85 A"/>
    <property type="chains" value="A=1-226"/>
</dbReference>
<dbReference type="PDBsum" id="1BI0"/>
<dbReference type="PDBsum" id="1BI1"/>
<dbReference type="PDBsum" id="1BI2"/>
<dbReference type="PDBsum" id="1BI3"/>
<dbReference type="PDBsum" id="1BYM"/>
<dbReference type="PDBsum" id="1C0W"/>
<dbReference type="PDBsum" id="1DDN"/>
<dbReference type="PDBsum" id="1DPR"/>
<dbReference type="PDBsum" id="1F5T"/>
<dbReference type="PDBsum" id="1FWZ"/>
<dbReference type="PDBsum" id="1G3S"/>
<dbReference type="PDBsum" id="1G3T"/>
<dbReference type="PDBsum" id="1G3W"/>
<dbReference type="PDBsum" id="1G3Y"/>
<dbReference type="PDBsum" id="1P92"/>
<dbReference type="PDBsum" id="1QVP"/>
<dbReference type="PDBsum" id="1QW1"/>
<dbReference type="PDBsum" id="1XCV"/>
<dbReference type="PDBsum" id="2DTR"/>
<dbReference type="PDBsum" id="2QQ9"/>
<dbReference type="PDBsum" id="2QQA"/>
<dbReference type="PDBsum" id="2QQB"/>
<dbReference type="PDBsum" id="2TDX"/>
<dbReference type="PDBsum" id="3GLX"/>
<dbReference type="BMRB" id="P0DJL7"/>
<dbReference type="SMR" id="P0DJL7"/>
<dbReference type="MINT" id="P0DJL7"/>
<dbReference type="STRING" id="257309.DIP1414"/>
<dbReference type="KEGG" id="cdi:DIP1414"/>
<dbReference type="HOGENOM" id="CLU_069532_0_0_11"/>
<dbReference type="EvolutionaryTrace" id="P0DJL7"/>
<dbReference type="PHI-base" id="PHI:11204"/>
<dbReference type="Proteomes" id="UP000002198">
    <property type="component" value="Chromosome"/>
</dbReference>
<dbReference type="GO" id="GO:0005737">
    <property type="term" value="C:cytoplasm"/>
    <property type="evidence" value="ECO:0007669"/>
    <property type="project" value="UniProtKB-SubCell"/>
</dbReference>
<dbReference type="GO" id="GO:0003677">
    <property type="term" value="F:DNA binding"/>
    <property type="evidence" value="ECO:0007669"/>
    <property type="project" value="UniProtKB-KW"/>
</dbReference>
<dbReference type="GO" id="GO:0003700">
    <property type="term" value="F:DNA-binding transcription factor activity"/>
    <property type="evidence" value="ECO:0007669"/>
    <property type="project" value="InterPro"/>
</dbReference>
<dbReference type="GO" id="GO:0042802">
    <property type="term" value="F:identical protein binding"/>
    <property type="evidence" value="ECO:0000353"/>
    <property type="project" value="CAFA"/>
</dbReference>
<dbReference type="GO" id="GO:0046983">
    <property type="term" value="F:protein dimerization activity"/>
    <property type="evidence" value="ECO:0007669"/>
    <property type="project" value="InterPro"/>
</dbReference>
<dbReference type="GO" id="GO:0017124">
    <property type="term" value="F:SH3 domain binding"/>
    <property type="evidence" value="ECO:0000315"/>
    <property type="project" value="CAFA"/>
</dbReference>
<dbReference type="GO" id="GO:0046914">
    <property type="term" value="F:transition metal ion binding"/>
    <property type="evidence" value="ECO:0007669"/>
    <property type="project" value="InterPro"/>
</dbReference>
<dbReference type="GO" id="GO:0045892">
    <property type="term" value="P:negative regulation of DNA-templated transcription"/>
    <property type="evidence" value="ECO:0007669"/>
    <property type="project" value="TreeGrafter"/>
</dbReference>
<dbReference type="FunFam" id="1.10.60.10:FF:000001">
    <property type="entry name" value="Iron dependent repressor"/>
    <property type="match status" value="1"/>
</dbReference>
<dbReference type="Gene3D" id="2.30.30.90">
    <property type="match status" value="1"/>
</dbReference>
<dbReference type="Gene3D" id="1.10.60.10">
    <property type="entry name" value="Iron dependent repressor, metal binding and dimerisation domain"/>
    <property type="match status" value="1"/>
</dbReference>
<dbReference type="Gene3D" id="1.10.10.10">
    <property type="entry name" value="Winged helix-like DNA-binding domain superfamily/Winged helix DNA-binding domain"/>
    <property type="match status" value="1"/>
</dbReference>
<dbReference type="InterPro" id="IPR040767">
    <property type="entry name" value="DtxR/IdeR_SH3"/>
</dbReference>
<dbReference type="InterPro" id="IPR050536">
    <property type="entry name" value="DtxR_MntR_Metal-Reg"/>
</dbReference>
<dbReference type="InterPro" id="IPR007167">
    <property type="entry name" value="Fe-transptr_FeoA-like"/>
</dbReference>
<dbReference type="InterPro" id="IPR001367">
    <property type="entry name" value="Fe_dep_repressor"/>
</dbReference>
<dbReference type="InterPro" id="IPR036421">
    <property type="entry name" value="Fe_dep_repressor_sf"/>
</dbReference>
<dbReference type="InterPro" id="IPR038157">
    <property type="entry name" value="FeoA_core_dom"/>
</dbReference>
<dbReference type="InterPro" id="IPR022687">
    <property type="entry name" value="HTH_DTXR"/>
</dbReference>
<dbReference type="InterPro" id="IPR022689">
    <property type="entry name" value="Iron_dep_repressor"/>
</dbReference>
<dbReference type="InterPro" id="IPR008988">
    <property type="entry name" value="Transcriptional_repressor_C"/>
</dbReference>
<dbReference type="InterPro" id="IPR036388">
    <property type="entry name" value="WH-like_DNA-bd_sf"/>
</dbReference>
<dbReference type="InterPro" id="IPR036390">
    <property type="entry name" value="WH_DNA-bd_sf"/>
</dbReference>
<dbReference type="PANTHER" id="PTHR33238">
    <property type="entry name" value="IRON (METAL) DEPENDENT REPRESSOR, DTXR FAMILY"/>
    <property type="match status" value="1"/>
</dbReference>
<dbReference type="PANTHER" id="PTHR33238:SF10">
    <property type="entry name" value="IRON-DEPENDENT REPRESSOR IDER"/>
    <property type="match status" value="1"/>
</dbReference>
<dbReference type="Pfam" id="PF18357">
    <property type="entry name" value="DtxR"/>
    <property type="match status" value="1"/>
</dbReference>
<dbReference type="Pfam" id="PF02742">
    <property type="entry name" value="Fe_dep_repr_C"/>
    <property type="match status" value="1"/>
</dbReference>
<dbReference type="Pfam" id="PF01325">
    <property type="entry name" value="Fe_dep_repress"/>
    <property type="match status" value="1"/>
</dbReference>
<dbReference type="SMART" id="SM00899">
    <property type="entry name" value="FeoA"/>
    <property type="match status" value="1"/>
</dbReference>
<dbReference type="SMART" id="SM00529">
    <property type="entry name" value="HTH_DTXR"/>
    <property type="match status" value="1"/>
</dbReference>
<dbReference type="SUPFAM" id="SSF50037">
    <property type="entry name" value="C-terminal domain of transcriptional repressors"/>
    <property type="match status" value="1"/>
</dbReference>
<dbReference type="SUPFAM" id="SSF47979">
    <property type="entry name" value="Iron-dependent repressor protein, dimerization domain"/>
    <property type="match status" value="1"/>
</dbReference>
<dbReference type="SUPFAM" id="SSF46785">
    <property type="entry name" value="Winged helix' DNA-binding domain"/>
    <property type="match status" value="1"/>
</dbReference>
<dbReference type="PROSITE" id="PS50944">
    <property type="entry name" value="HTH_DTXR"/>
    <property type="match status" value="1"/>
</dbReference>
<evidence type="ECO:0000255" key="1">
    <source>
        <dbReference type="PROSITE-ProRule" id="PRU00296"/>
    </source>
</evidence>
<evidence type="ECO:0000305" key="2"/>
<evidence type="ECO:0007829" key="3">
    <source>
        <dbReference type="PDB" id="1DPR"/>
    </source>
</evidence>
<evidence type="ECO:0007829" key="4">
    <source>
        <dbReference type="PDB" id="1P92"/>
    </source>
</evidence>
<evidence type="ECO:0007829" key="5">
    <source>
        <dbReference type="PDB" id="1QW1"/>
    </source>
</evidence>
<evidence type="ECO:0007829" key="6">
    <source>
        <dbReference type="PDB" id="2QQ9"/>
    </source>
</evidence>
<evidence type="ECO:0007829" key="7">
    <source>
        <dbReference type="PDB" id="2QQA"/>
    </source>
</evidence>
<comment type="function">
    <text>Iron-binding repressor of the dipheteria toxin gene expression. May serve as a global regulator of gene expression. Represses ripA under iron excess.</text>
</comment>
<comment type="subunit">
    <text>Homodimer.</text>
</comment>
<comment type="subcellular location">
    <subcellularLocation>
        <location>Cytoplasm</location>
    </subcellularLocation>
</comment>
<comment type="miscellaneous">
    <text>The N-terminal region may be involved in iron binding and may associate with the tox operator. Binding of dtxR to tox operator requires a divalent metal ion such as cobalt, ferric, manganese, and nickel ions whereas zinc ions show weak activation.</text>
</comment>
<comment type="miscellaneous">
    <text>The dtxR gene was functional in the non-toxygenic strains CD95/211-, CD95/305- and CD95/407- isolated in the United Kingdom. These findings demonstrate that, if lysogenised by a bacteriophage, non-toxygenic strains could produce toxin and therefore represent a potential reservoir for toxygenic C.diphtheriae.</text>
</comment>
<comment type="similarity">
    <text evidence="2">Belongs to the DtxR/MntR family.</text>
</comment>
<gene>
    <name type="primary">dtxR</name>
    <name type="ordered locus">DIP1414</name>
</gene>
<feature type="chain" id="PRO_0000201106" description="Diphtheria toxin repressor">
    <location>
        <begin position="1"/>
        <end position="226"/>
    </location>
</feature>
<feature type="domain" description="HTH dtxR-type" evidence="1">
    <location>
        <begin position="4"/>
        <end position="65"/>
    </location>
</feature>
<feature type="sequence variant" description="In iron-insensitive tox constitutive mutant C7hm723.">
    <original>R</original>
    <variation>H</variation>
    <location>
        <position position="47"/>
    </location>
</feature>
<feature type="sequence variant" description="In strain: CD95/211-.">
    <original>G</original>
    <variation>R</variation>
    <location>
        <position position="141"/>
    </location>
</feature>
<feature type="sequence variant" description="In strain: C7(-), C7hm723(-), 1030(-), CD95/305-, CD95/211- and CD95/407-.">
    <original>V</original>
    <variation>A</variation>
    <location>
        <position position="147"/>
    </location>
</feature>
<feature type="sequence variant" description="In strain: 1030(-).">
    <original>I</original>
    <variation>V</variation>
    <location>
        <position position="165"/>
    </location>
</feature>
<feature type="sequence variant" description="In strain: 1030(-).">
    <original>V</original>
    <variation>A</variation>
    <location>
        <position position="174"/>
    </location>
</feature>
<feature type="sequence variant" description="In strain: 1030(-).">
    <original>S</original>
    <variation>T</variation>
    <location>
        <position position="191"/>
    </location>
</feature>
<feature type="sequence variant" description="In strain: CD95/407-.">
    <original>D</original>
    <variation>V</variation>
    <location>
        <position position="199"/>
    </location>
</feature>
<feature type="sequence variant" description="In strain: CD95/305-.">
    <original>H</original>
    <variation>R</variation>
    <location>
        <position position="201"/>
    </location>
</feature>
<feature type="sequence variant" description="In strain: 1030(-).">
    <original>S</original>
    <variation>R</variation>
    <location>
        <position position="205"/>
    </location>
</feature>
<feature type="sequence variant" description="In strain: C7(-), C7hm723(-), CD95/305-, CD95/211- and CD95/407-.">
    <original>I</original>
    <variation>L</variation>
    <location>
        <position position="214"/>
    </location>
</feature>
<feature type="sequence variant" description="In strain: 1030(-).">
    <original>I</original>
    <variation>Y</variation>
    <location>
        <position position="214"/>
    </location>
</feature>
<feature type="sequence variant" description="In strain: 1030(-).">
    <original>A</original>
    <variation>T</variation>
    <location>
        <position position="218"/>
    </location>
</feature>
<feature type="sequence variant" description="In strain: CD95/211-.">
    <original>I</original>
    <variation>M</variation>
    <location>
        <position position="221"/>
    </location>
</feature>
<feature type="sequence variant" description="In strain: CD95/407-.">
    <original>I</original>
    <variation>T</variation>
    <location>
        <position position="221"/>
    </location>
</feature>
<feature type="helix" evidence="6">
    <location>
        <begin position="4"/>
        <end position="21"/>
    </location>
</feature>
<feature type="helix" evidence="6">
    <location>
        <begin position="27"/>
        <end position="34"/>
    </location>
</feature>
<feature type="helix" evidence="6">
    <location>
        <begin position="38"/>
        <end position="50"/>
    </location>
</feature>
<feature type="strand" evidence="6">
    <location>
        <begin position="53"/>
        <end position="56"/>
    </location>
</feature>
<feature type="strand" evidence="6">
    <location>
        <begin position="60"/>
        <end position="64"/>
    </location>
</feature>
<feature type="helix" evidence="6">
    <location>
        <begin position="66"/>
        <end position="88"/>
    </location>
</feature>
<feature type="helix" evidence="6">
    <location>
        <begin position="94"/>
        <end position="104"/>
    </location>
</feature>
<feature type="turn" evidence="6">
    <location>
        <begin position="105"/>
        <end position="107"/>
    </location>
</feature>
<feature type="helix" evidence="6">
    <location>
        <begin position="110"/>
        <end position="119"/>
    </location>
</feature>
<feature type="strand" evidence="3">
    <location>
        <begin position="127"/>
        <end position="130"/>
    </location>
</feature>
<feature type="helix" evidence="6">
    <location>
        <begin position="135"/>
        <end position="138"/>
    </location>
</feature>
<feature type="strand" evidence="5">
    <location>
        <begin position="145"/>
        <end position="148"/>
    </location>
</feature>
<feature type="strand" evidence="7">
    <location>
        <begin position="149"/>
        <end position="151"/>
    </location>
</feature>
<feature type="helix" evidence="6">
    <location>
        <begin position="152"/>
        <end position="155"/>
    </location>
</feature>
<feature type="strand" evidence="6">
    <location>
        <begin position="161"/>
        <end position="167"/>
    </location>
</feature>
<feature type="helix" evidence="6">
    <location>
        <begin position="170"/>
        <end position="172"/>
    </location>
</feature>
<feature type="helix" evidence="6">
    <location>
        <begin position="177"/>
        <end position="184"/>
    </location>
</feature>
<feature type="strand" evidence="6">
    <location>
        <begin position="188"/>
        <end position="195"/>
    </location>
</feature>
<feature type="strand" evidence="4">
    <location>
        <begin position="197"/>
        <end position="199"/>
    </location>
</feature>
<feature type="strand" evidence="6">
    <location>
        <begin position="203"/>
        <end position="208"/>
    </location>
</feature>
<feature type="strand" evidence="6">
    <location>
        <begin position="210"/>
        <end position="212"/>
    </location>
</feature>
<feature type="helix" evidence="6">
    <location>
        <begin position="215"/>
        <end position="220"/>
    </location>
</feature>
<feature type="strand" evidence="6">
    <location>
        <begin position="222"/>
        <end position="224"/>
    </location>
</feature>